<sequence length="366" mass="39753">MSGNTLGQNFRVTTFGESHGIALGAIIDGCPPGMELSEEDIQIELDRRKPGTSKHATARREDDKVQILSGVFEGKTTGTPIGLLIHNTDQRSKDYSKVAETFRPAHADYTYTQKYGIRDYRGGGRSSARETAMRVAAGAVAKKYLKERLGIEIKGYLSQLGPITVDNVSWPFDNDNEYFCPDKDKQEEIRQYMDNLLKQKDSVGAKISIIAKNVPVGLGEPVFDRLDADLAHALMSINAVKGVEIGDGFAVAAQRGTEHRDEMTPEGFVSNHAGGILGGISTGQDIVAHIALKPTSSIMTPGRSINTEGEAIEMVTKGRHDPCVGIRATPIAEAKVALVLMDHFMRNRAQNGDVVPPVMDLAHPEN</sequence>
<comment type="function">
    <text evidence="1">Catalyzes the anti-1,4-elimination of the C-3 phosphate and the C-6 proR hydrogen from 5-enolpyruvylshikimate-3-phosphate (EPSP) to yield chorismate, which is the branch point compound that serves as the starting substrate for the three terminal pathways of aromatic amino acid biosynthesis. This reaction introduces a second double bond into the aromatic ring system.</text>
</comment>
<comment type="catalytic activity">
    <reaction evidence="1">
        <text>5-O-(1-carboxyvinyl)-3-phosphoshikimate = chorismate + phosphate</text>
        <dbReference type="Rhea" id="RHEA:21020"/>
        <dbReference type="ChEBI" id="CHEBI:29748"/>
        <dbReference type="ChEBI" id="CHEBI:43474"/>
        <dbReference type="ChEBI" id="CHEBI:57701"/>
        <dbReference type="EC" id="4.2.3.5"/>
    </reaction>
</comment>
<comment type="cofactor">
    <cofactor evidence="1">
        <name>FMNH2</name>
        <dbReference type="ChEBI" id="CHEBI:57618"/>
    </cofactor>
    <text evidence="1">Reduced FMN (FMNH(2)).</text>
</comment>
<comment type="pathway">
    <text evidence="1">Metabolic intermediate biosynthesis; chorismate biosynthesis; chorismate from D-erythrose 4-phosphate and phosphoenolpyruvate: step 7/7.</text>
</comment>
<comment type="subunit">
    <text evidence="1">Homotetramer.</text>
</comment>
<comment type="similarity">
    <text evidence="1">Belongs to the chorismate synthase family.</text>
</comment>
<accession>Q31FE3</accession>
<proteinExistence type="inferred from homology"/>
<gene>
    <name evidence="1" type="primary">aroC</name>
    <name type="ordered locus">Tcr_1538</name>
</gene>
<feature type="chain" id="PRO_0000256357" description="Chorismate synthase">
    <location>
        <begin position="1"/>
        <end position="366"/>
    </location>
</feature>
<feature type="binding site" evidence="1">
    <location>
        <position position="48"/>
    </location>
    <ligand>
        <name>NADP(+)</name>
        <dbReference type="ChEBI" id="CHEBI:58349"/>
    </ligand>
</feature>
<feature type="binding site" evidence="1">
    <location>
        <begin position="125"/>
        <end position="127"/>
    </location>
    <ligand>
        <name>FMN</name>
        <dbReference type="ChEBI" id="CHEBI:58210"/>
    </ligand>
</feature>
<feature type="binding site" evidence="1">
    <location>
        <begin position="238"/>
        <end position="239"/>
    </location>
    <ligand>
        <name>FMN</name>
        <dbReference type="ChEBI" id="CHEBI:58210"/>
    </ligand>
</feature>
<feature type="binding site" evidence="1">
    <location>
        <position position="278"/>
    </location>
    <ligand>
        <name>FMN</name>
        <dbReference type="ChEBI" id="CHEBI:58210"/>
    </ligand>
</feature>
<feature type="binding site" evidence="1">
    <location>
        <begin position="293"/>
        <end position="297"/>
    </location>
    <ligand>
        <name>FMN</name>
        <dbReference type="ChEBI" id="CHEBI:58210"/>
    </ligand>
</feature>
<feature type="binding site" evidence="1">
    <location>
        <position position="319"/>
    </location>
    <ligand>
        <name>FMN</name>
        <dbReference type="ChEBI" id="CHEBI:58210"/>
    </ligand>
</feature>
<evidence type="ECO:0000255" key="1">
    <source>
        <dbReference type="HAMAP-Rule" id="MF_00300"/>
    </source>
</evidence>
<reference key="1">
    <citation type="journal article" date="2006" name="PLoS Biol.">
        <title>The genome of deep-sea vent chemolithoautotroph Thiomicrospira crunogena XCL-2.</title>
        <authorList>
            <person name="Scott K.M."/>
            <person name="Sievert S.M."/>
            <person name="Abril F.N."/>
            <person name="Ball L.A."/>
            <person name="Barrett C.J."/>
            <person name="Blake R.A."/>
            <person name="Boller A.J."/>
            <person name="Chain P.S.G."/>
            <person name="Clark J.A."/>
            <person name="Davis C.R."/>
            <person name="Detter C."/>
            <person name="Do K.F."/>
            <person name="Dobrinski K.P."/>
            <person name="Faza B.I."/>
            <person name="Fitzpatrick K.A."/>
            <person name="Freyermuth S.K."/>
            <person name="Harmer T.L."/>
            <person name="Hauser L.J."/>
            <person name="Huegler M."/>
            <person name="Kerfeld C.A."/>
            <person name="Klotz M.G."/>
            <person name="Kong W.W."/>
            <person name="Land M."/>
            <person name="Lapidus A."/>
            <person name="Larimer F.W."/>
            <person name="Longo D.L."/>
            <person name="Lucas S."/>
            <person name="Malfatti S.A."/>
            <person name="Massey S.E."/>
            <person name="Martin D.D."/>
            <person name="McCuddin Z."/>
            <person name="Meyer F."/>
            <person name="Moore J.L."/>
            <person name="Ocampo L.H. Jr."/>
            <person name="Paul J.H."/>
            <person name="Paulsen I.T."/>
            <person name="Reep D.K."/>
            <person name="Ren Q."/>
            <person name="Ross R.L."/>
            <person name="Sato P.Y."/>
            <person name="Thomas P."/>
            <person name="Tinkham L.E."/>
            <person name="Zeruth G.T."/>
        </authorList>
    </citation>
    <scope>NUCLEOTIDE SEQUENCE [LARGE SCALE GENOMIC DNA]</scope>
    <source>
        <strain>DSM 25203 / XCL-2</strain>
    </source>
</reference>
<dbReference type="EC" id="4.2.3.5" evidence="1"/>
<dbReference type="EMBL" id="CP000109">
    <property type="protein sequence ID" value="ABB42130.1"/>
    <property type="molecule type" value="Genomic_DNA"/>
</dbReference>
<dbReference type="SMR" id="Q31FE3"/>
<dbReference type="STRING" id="317025.Tcr_1538"/>
<dbReference type="KEGG" id="tcx:Tcr_1538"/>
<dbReference type="eggNOG" id="COG0082">
    <property type="taxonomic scope" value="Bacteria"/>
</dbReference>
<dbReference type="HOGENOM" id="CLU_034547_0_2_6"/>
<dbReference type="OrthoDB" id="9771806at2"/>
<dbReference type="UniPathway" id="UPA00053">
    <property type="reaction ID" value="UER00090"/>
</dbReference>
<dbReference type="GO" id="GO:0005829">
    <property type="term" value="C:cytosol"/>
    <property type="evidence" value="ECO:0007669"/>
    <property type="project" value="TreeGrafter"/>
</dbReference>
<dbReference type="GO" id="GO:0004107">
    <property type="term" value="F:chorismate synthase activity"/>
    <property type="evidence" value="ECO:0007669"/>
    <property type="project" value="UniProtKB-UniRule"/>
</dbReference>
<dbReference type="GO" id="GO:0010181">
    <property type="term" value="F:FMN binding"/>
    <property type="evidence" value="ECO:0007669"/>
    <property type="project" value="TreeGrafter"/>
</dbReference>
<dbReference type="GO" id="GO:0008652">
    <property type="term" value="P:amino acid biosynthetic process"/>
    <property type="evidence" value="ECO:0007669"/>
    <property type="project" value="UniProtKB-KW"/>
</dbReference>
<dbReference type="GO" id="GO:0009073">
    <property type="term" value="P:aromatic amino acid family biosynthetic process"/>
    <property type="evidence" value="ECO:0007669"/>
    <property type="project" value="UniProtKB-KW"/>
</dbReference>
<dbReference type="GO" id="GO:0009423">
    <property type="term" value="P:chorismate biosynthetic process"/>
    <property type="evidence" value="ECO:0007669"/>
    <property type="project" value="UniProtKB-UniRule"/>
</dbReference>
<dbReference type="CDD" id="cd07304">
    <property type="entry name" value="Chorismate_synthase"/>
    <property type="match status" value="1"/>
</dbReference>
<dbReference type="FunFam" id="3.60.150.10:FF:000001">
    <property type="entry name" value="Chorismate synthase"/>
    <property type="match status" value="1"/>
</dbReference>
<dbReference type="Gene3D" id="3.60.150.10">
    <property type="entry name" value="Chorismate synthase AroC"/>
    <property type="match status" value="1"/>
</dbReference>
<dbReference type="HAMAP" id="MF_00300">
    <property type="entry name" value="Chorismate_synth"/>
    <property type="match status" value="1"/>
</dbReference>
<dbReference type="InterPro" id="IPR000453">
    <property type="entry name" value="Chorismate_synth"/>
</dbReference>
<dbReference type="InterPro" id="IPR035904">
    <property type="entry name" value="Chorismate_synth_AroC_sf"/>
</dbReference>
<dbReference type="InterPro" id="IPR020541">
    <property type="entry name" value="Chorismate_synthase_CS"/>
</dbReference>
<dbReference type="NCBIfam" id="TIGR00033">
    <property type="entry name" value="aroC"/>
    <property type="match status" value="1"/>
</dbReference>
<dbReference type="NCBIfam" id="NF003793">
    <property type="entry name" value="PRK05382.1"/>
    <property type="match status" value="1"/>
</dbReference>
<dbReference type="PANTHER" id="PTHR21085">
    <property type="entry name" value="CHORISMATE SYNTHASE"/>
    <property type="match status" value="1"/>
</dbReference>
<dbReference type="PANTHER" id="PTHR21085:SF0">
    <property type="entry name" value="CHORISMATE SYNTHASE"/>
    <property type="match status" value="1"/>
</dbReference>
<dbReference type="Pfam" id="PF01264">
    <property type="entry name" value="Chorismate_synt"/>
    <property type="match status" value="1"/>
</dbReference>
<dbReference type="PIRSF" id="PIRSF001456">
    <property type="entry name" value="Chorismate_synth"/>
    <property type="match status" value="1"/>
</dbReference>
<dbReference type="SUPFAM" id="SSF103263">
    <property type="entry name" value="Chorismate synthase, AroC"/>
    <property type="match status" value="1"/>
</dbReference>
<dbReference type="PROSITE" id="PS00787">
    <property type="entry name" value="CHORISMATE_SYNTHASE_1"/>
    <property type="match status" value="1"/>
</dbReference>
<dbReference type="PROSITE" id="PS00788">
    <property type="entry name" value="CHORISMATE_SYNTHASE_2"/>
    <property type="match status" value="1"/>
</dbReference>
<organism>
    <name type="scientific">Hydrogenovibrio crunogenus (strain DSM 25203 / XCL-2)</name>
    <name type="common">Thiomicrospira crunogena</name>
    <dbReference type="NCBI Taxonomy" id="317025"/>
    <lineage>
        <taxon>Bacteria</taxon>
        <taxon>Pseudomonadati</taxon>
        <taxon>Pseudomonadota</taxon>
        <taxon>Gammaproteobacteria</taxon>
        <taxon>Thiotrichales</taxon>
        <taxon>Piscirickettsiaceae</taxon>
        <taxon>Hydrogenovibrio</taxon>
    </lineage>
</organism>
<keyword id="KW-0028">Amino-acid biosynthesis</keyword>
<keyword id="KW-0057">Aromatic amino acid biosynthesis</keyword>
<keyword id="KW-0274">FAD</keyword>
<keyword id="KW-0285">Flavoprotein</keyword>
<keyword id="KW-0288">FMN</keyword>
<keyword id="KW-0456">Lyase</keyword>
<keyword id="KW-0521">NADP</keyword>
<name>AROC_HYDCU</name>
<protein>
    <recommendedName>
        <fullName evidence="1">Chorismate synthase</fullName>
        <shortName evidence="1">CS</shortName>
        <ecNumber evidence="1">4.2.3.5</ecNumber>
    </recommendedName>
    <alternativeName>
        <fullName evidence="1">5-enolpyruvylshikimate-3-phosphate phospholyase</fullName>
    </alternativeName>
</protein>